<accession>Q8IVP5</accession>
<comment type="function">
    <text evidence="2 3 5 6 7 9 10 11">Integral mitochondrial outer-membrane protein that mediates the formation of mitochondria-associated endoplasmic reticulum membranes (MAMs) (PubMed:33972548). In turn, mediates angiogenesis and neoangiogenesis through interference with intracellular Ca(2+) communication and regulation of the vascular endothelial growth factor receptor KDR/VEGFR2 expression at both mRNA and protein levels (PubMed:33972548). Also acts as an activator of hypoxia-induced mitophagy, an important mechanism for mitochondrial quality and homeostasis, by interacting with and recruiting LC3 protein family to mitochondria (PubMed:22267086, PubMed:24671035, PubMed:24746696, PubMed:27653272). Mechanistically, recruits DRP1 at ER-mitochondria contact sites leading to DRP1 oligomerization and GTPase activity to facilitate mitochondrial fission during hypoxia (PubMed:27145933, PubMed:33978709). Additionally, plays a role in hepatic ferroptosis by interacting directly with glutathione peroxidase/GPX4 to facilitate its recruitment into mitochondria through TOM/TIM complex where it is degraded by mitophagy (PubMed:36828120).</text>
</comment>
<comment type="subunit">
    <text evidence="2 6 8 11">Interacts (via YXXL motif) with MAP1 LC3 family proteins MAP1LC3A, MAP1LC3B and GABARAP. Interacts with DNM1L/DPR1 (PubMed:27145933). Interacts with GPX4 (PubMed:36828120).</text>
</comment>
<comment type="interaction">
    <interactant intactId="EBI-3059266">
        <id>Q8IVP5</id>
    </interactant>
    <interactant intactId="EBI-741533">
        <id>P56545</id>
        <label>CTBP2</label>
    </interactant>
    <organismsDiffer>false</organismsDiffer>
    <experiments>3</experiments>
</comment>
<comment type="interaction">
    <interactant intactId="EBI-3059266">
        <id>Q8IVP5</id>
    </interactant>
    <interactant intactId="EBI-2339219">
        <id>Q08426</id>
        <label>EHHADH</label>
    </interactant>
    <organismsDiffer>false</organismsDiffer>
    <experiments>4</experiments>
</comment>
<comment type="interaction">
    <interactant intactId="EBI-3059266">
        <id>Q8IVP5</id>
    </interactant>
    <interactant intactId="EBI-720116">
        <id>P60520</id>
        <label>GABARAPL2</label>
    </interactant>
    <organismsDiffer>false</organismsDiffer>
    <experiments>4</experiments>
</comment>
<comment type="interaction">
    <interactant intactId="EBI-3059266">
        <id>Q8IVP5</id>
    </interactant>
    <interactant intactId="EBI-720768">
        <id>Q9H492</id>
        <label>MAP1LC3A</label>
    </interactant>
    <organismsDiffer>false</organismsDiffer>
    <experiments>4</experiments>
</comment>
<comment type="interaction">
    <interactant intactId="EBI-3059266">
        <id>Q8IVP5</id>
    </interactant>
    <interactant intactId="EBI-373144">
        <id>Q9GZQ8</id>
        <label>MAP1LC3B</label>
    </interactant>
    <organismsDiffer>false</organismsDiffer>
    <experiments>8</experiments>
</comment>
<comment type="interaction">
    <interactant intactId="EBI-3059266">
        <id>Q8IVP5</id>
    </interactant>
    <interactant intactId="EBI-7825321">
        <id>Q96E29</id>
        <label>MTERF3</label>
    </interactant>
    <organismsDiffer>false</organismsDiffer>
    <experiments>3</experiments>
</comment>
<comment type="interaction">
    <interactant intactId="EBI-3059266">
        <id>Q8IVP5</id>
    </interactant>
    <interactant intactId="EBI-714881">
        <id>Q9HC62</id>
        <label>SENP2</label>
    </interactant>
    <organismsDiffer>false</organismsDiffer>
    <experiments>3</experiments>
</comment>
<comment type="interaction">
    <interactant intactId="EBI-3059266">
        <id>Q8IVP5</id>
    </interactant>
    <interactant intactId="EBI-2623095">
        <id>Q9Y371</id>
        <label>SH3GLB1</label>
    </interactant>
    <organismsDiffer>false</organismsDiffer>
    <experiments>3</experiments>
</comment>
<comment type="interaction">
    <interactant intactId="EBI-3059266">
        <id>Q8IVP5</id>
    </interactant>
    <interactant intactId="EBI-10281975">
        <id>Q96AG3</id>
        <label>SLC25A46</label>
    </interactant>
    <organismsDiffer>false</organismsDiffer>
    <experiments>3</experiments>
</comment>
<comment type="interaction">
    <interactant intactId="EBI-3059266">
        <id>Q8IVP5</id>
    </interactant>
    <interactant intactId="EBI-2822329">
        <id>Q13596</id>
        <label>SNX1</label>
    </interactant>
    <organismsDiffer>false</organismsDiffer>
    <experiments>3</experiments>
</comment>
<comment type="interaction">
    <interactant intactId="EBI-3059266">
        <id>Q8IVP5</id>
    </interactant>
    <interactant intactId="EBI-12261790">
        <id>A0A384ME17</id>
        <label>TUFM</label>
    </interactant>
    <organismsDiffer>false</organismsDiffer>
    <experiments>3</experiments>
</comment>
<comment type="interaction">
    <interactant intactId="EBI-3059266">
        <id>Q8IVP5</id>
    </interactant>
    <interactant intactId="EBI-359097">
        <id>P49411</id>
        <label>TUFM</label>
    </interactant>
    <organismsDiffer>false</organismsDiffer>
    <experiments>3</experiments>
</comment>
<comment type="interaction">
    <interactant intactId="EBI-3059266">
        <id>Q8IVP5</id>
    </interactant>
    <interactant intactId="EBI-515331">
        <id>P07947</id>
        <label>YES1</label>
    </interactant>
    <organismsDiffer>false</organismsDiffer>
    <experiments>4</experiments>
</comment>
<comment type="interaction">
    <interactant intactId="EBI-3059266">
        <id>Q8IVP5</id>
    </interactant>
    <interactant intactId="EBI-8390771">
        <id>O70405</id>
        <label>Ulk1</label>
    </interactant>
    <organismsDiffer>true</organismsDiffer>
    <experiments>3</experiments>
</comment>
<comment type="subcellular location">
    <subcellularLocation>
        <location evidence="2 6 10">Mitochondrion outer membrane</location>
        <topology evidence="2">Multi-pass membrane protein</topology>
    </subcellularLocation>
</comment>
<comment type="tissue specificity">
    <text evidence="2">Widely expressed.</text>
</comment>
<comment type="domain">
    <text evidence="2">The YXXL motif mediates the interaction with MAP1 LC3 family proteins MAP1LC3A, MAP1LC3B and GABARAP.</text>
</comment>
<comment type="PTM">
    <text evidence="2 3 5 7">Phosphorylation at Ser-13 by CK2 and at Tyr-18 by SRC inhibits activation of mitophagy. Following hypoxia, dephosphorylated at Tyr-18, leading to interaction with MAP1 LC3 family proteins and triggering mitophagy. Dephosphorylation is mediated by PGAM5 (PubMed:24746696). Phosphorylated by ULK1 at Ser-17 which enhances FUNDC1 binding to LC3 (PubMed:24671035).</text>
</comment>
<comment type="PTM">
    <text evidence="10">Ubiquitinated on Lys-119. Deubiquitinated by USP19; leading to hypoxia-induced DRP1 oligomerization and GTPase activity.</text>
</comment>
<comment type="similarity">
    <text evidence="12">Belongs to the FUN14 family.</text>
</comment>
<dbReference type="EMBL" id="AL136137">
    <property type="status" value="NOT_ANNOTATED_CDS"/>
    <property type="molecule type" value="Genomic_DNA"/>
</dbReference>
<dbReference type="EMBL" id="AL022163">
    <property type="status" value="NOT_ANNOTATED_CDS"/>
    <property type="molecule type" value="Genomic_DNA"/>
</dbReference>
<dbReference type="EMBL" id="BC035015">
    <property type="protein sequence ID" value="AAH35015.1"/>
    <property type="molecule type" value="mRNA"/>
</dbReference>
<dbReference type="EMBL" id="BC042813">
    <property type="protein sequence ID" value="AAH42813.1"/>
    <property type="molecule type" value="mRNA"/>
</dbReference>
<dbReference type="CCDS" id="CCDS14263.1"/>
<dbReference type="RefSeq" id="NP_776155.1">
    <property type="nucleotide sequence ID" value="NM_173794.4"/>
</dbReference>
<dbReference type="PDB" id="2N9X">
    <property type="method" value="NMR"/>
    <property type="chains" value="B=10-26"/>
</dbReference>
<dbReference type="PDB" id="5GMV">
    <property type="method" value="X-ray"/>
    <property type="resolution" value="2.25 A"/>
    <property type="chains" value="C/D=16-23"/>
</dbReference>
<dbReference type="PDBsum" id="2N9X"/>
<dbReference type="PDBsum" id="5GMV"/>
<dbReference type="BMRB" id="Q8IVP5"/>
<dbReference type="SMR" id="Q8IVP5"/>
<dbReference type="BioGRID" id="126561">
    <property type="interactions" value="31"/>
</dbReference>
<dbReference type="FunCoup" id="Q8IVP5">
    <property type="interactions" value="134"/>
</dbReference>
<dbReference type="IntAct" id="Q8IVP5">
    <property type="interactions" value="21"/>
</dbReference>
<dbReference type="MINT" id="Q8IVP5"/>
<dbReference type="STRING" id="9606.ENSP00000367284"/>
<dbReference type="iPTMnet" id="Q8IVP5"/>
<dbReference type="PhosphoSitePlus" id="Q8IVP5"/>
<dbReference type="SwissPalm" id="Q8IVP5"/>
<dbReference type="BioMuta" id="FUNDC1"/>
<dbReference type="DMDM" id="74750673"/>
<dbReference type="jPOST" id="Q8IVP5"/>
<dbReference type="MassIVE" id="Q8IVP5"/>
<dbReference type="PaxDb" id="9606-ENSP00000367284"/>
<dbReference type="PeptideAtlas" id="Q8IVP5"/>
<dbReference type="ProteomicsDB" id="70750"/>
<dbReference type="Pumba" id="Q8IVP5"/>
<dbReference type="Antibodypedia" id="25165">
    <property type="antibodies" value="225 antibodies from 27 providers"/>
</dbReference>
<dbReference type="DNASU" id="139341"/>
<dbReference type="Ensembl" id="ENST00000378045.5">
    <property type="protein sequence ID" value="ENSP00000367284.4"/>
    <property type="gene ID" value="ENSG00000069509.6"/>
</dbReference>
<dbReference type="GeneID" id="139341"/>
<dbReference type="KEGG" id="hsa:139341"/>
<dbReference type="MANE-Select" id="ENST00000378045.5">
    <property type="protein sequence ID" value="ENSP00000367284.4"/>
    <property type="RefSeq nucleotide sequence ID" value="NM_173794.4"/>
    <property type="RefSeq protein sequence ID" value="NP_776155.1"/>
</dbReference>
<dbReference type="UCSC" id="uc004dgc.4">
    <property type="organism name" value="human"/>
</dbReference>
<dbReference type="AGR" id="HGNC:28746"/>
<dbReference type="CTD" id="139341"/>
<dbReference type="DisGeNET" id="139341"/>
<dbReference type="GeneCards" id="FUNDC1"/>
<dbReference type="HGNC" id="HGNC:28746">
    <property type="gene designation" value="FUNDC1"/>
</dbReference>
<dbReference type="HPA" id="ENSG00000069509">
    <property type="expression patterns" value="Low tissue specificity"/>
</dbReference>
<dbReference type="MIM" id="300871">
    <property type="type" value="gene"/>
</dbReference>
<dbReference type="neXtProt" id="NX_Q8IVP5"/>
<dbReference type="OpenTargets" id="ENSG00000069509"/>
<dbReference type="PharmGKB" id="PA134875965"/>
<dbReference type="VEuPathDB" id="HostDB:ENSG00000069509"/>
<dbReference type="eggNOG" id="KOG4099">
    <property type="taxonomic scope" value="Eukaryota"/>
</dbReference>
<dbReference type="GeneTree" id="ENSGT00940000154517"/>
<dbReference type="HOGENOM" id="CLU_095425_2_0_1"/>
<dbReference type="InParanoid" id="Q8IVP5"/>
<dbReference type="OMA" id="NAPPQEY"/>
<dbReference type="OrthoDB" id="163794at2759"/>
<dbReference type="PAN-GO" id="Q8IVP5">
    <property type="GO annotations" value="2 GO annotations based on evolutionary models"/>
</dbReference>
<dbReference type="PhylomeDB" id="Q8IVP5"/>
<dbReference type="TreeFam" id="TF300280"/>
<dbReference type="PathwayCommons" id="Q8IVP5"/>
<dbReference type="Reactome" id="R-HSA-8934903">
    <property type="pathway name" value="Receptor Mediated Mitophagy"/>
</dbReference>
<dbReference type="SignaLink" id="Q8IVP5"/>
<dbReference type="SIGNOR" id="Q8IVP5"/>
<dbReference type="BioGRID-ORCS" id="139341">
    <property type="hits" value="12 hits in 780 CRISPR screens"/>
</dbReference>
<dbReference type="ChiTaRS" id="FUNDC1">
    <property type="organism name" value="human"/>
</dbReference>
<dbReference type="GeneWiki" id="FUNDC1"/>
<dbReference type="GenomeRNAi" id="139341"/>
<dbReference type="Pharos" id="Q8IVP5">
    <property type="development level" value="Tbio"/>
</dbReference>
<dbReference type="PRO" id="PR:Q8IVP5"/>
<dbReference type="Proteomes" id="UP000005640">
    <property type="component" value="Chromosome X"/>
</dbReference>
<dbReference type="RNAct" id="Q8IVP5">
    <property type="molecule type" value="protein"/>
</dbReference>
<dbReference type="Bgee" id="ENSG00000069509">
    <property type="expression patterns" value="Expressed in left ventricle myocardium and 186 other cell types or tissues"/>
</dbReference>
<dbReference type="GO" id="GO:0005741">
    <property type="term" value="C:mitochondrial outer membrane"/>
    <property type="evidence" value="ECO:0000314"/>
    <property type="project" value="UniProtKB"/>
</dbReference>
<dbReference type="GO" id="GO:0005739">
    <property type="term" value="C:mitochondrion"/>
    <property type="evidence" value="ECO:0006056"/>
    <property type="project" value="FlyBase"/>
</dbReference>
<dbReference type="GO" id="GO:0000422">
    <property type="term" value="P:autophagy of mitochondrion"/>
    <property type="evidence" value="ECO:0000314"/>
    <property type="project" value="UniProtKB"/>
</dbReference>
<dbReference type="GO" id="GO:0008053">
    <property type="term" value="P:mitochondrial fusion"/>
    <property type="evidence" value="ECO:0000316"/>
    <property type="project" value="FlyBase"/>
</dbReference>
<dbReference type="GO" id="GO:0000423">
    <property type="term" value="P:mitophagy"/>
    <property type="evidence" value="ECO:0000316"/>
    <property type="project" value="FlyBase"/>
</dbReference>
<dbReference type="GO" id="GO:0001666">
    <property type="term" value="P:response to hypoxia"/>
    <property type="evidence" value="ECO:0000314"/>
    <property type="project" value="UniProtKB"/>
</dbReference>
<dbReference type="InterPro" id="IPR007014">
    <property type="entry name" value="FUN14"/>
</dbReference>
<dbReference type="PANTHER" id="PTHR21346">
    <property type="entry name" value="FUN14 DOMAIN CONTAINING"/>
    <property type="match status" value="1"/>
</dbReference>
<dbReference type="PANTHER" id="PTHR21346:SF2">
    <property type="entry name" value="FUN14 DOMAIN-CONTAINING PROTEIN 1"/>
    <property type="match status" value="1"/>
</dbReference>
<dbReference type="Pfam" id="PF04930">
    <property type="entry name" value="FUN14"/>
    <property type="match status" value="1"/>
</dbReference>
<feature type="chain" id="PRO_0000271345" description="FUN14 domain-containing protein 1">
    <location>
        <begin position="1"/>
        <end position="155"/>
    </location>
</feature>
<feature type="topological domain" description="Cytoplasmic" evidence="1">
    <location>
        <begin position="1"/>
        <end position="47"/>
    </location>
</feature>
<feature type="transmembrane region" description="Helical" evidence="1">
    <location>
        <begin position="48"/>
        <end position="68"/>
    </location>
</feature>
<feature type="topological domain" description="Mitochondrial intermembrane" evidence="1">
    <location>
        <begin position="69"/>
        <end position="74"/>
    </location>
</feature>
<feature type="transmembrane region" description="Helical" evidence="1">
    <location>
        <begin position="75"/>
        <end position="95"/>
    </location>
</feature>
<feature type="topological domain" description="Cytoplasmic" evidence="1">
    <location>
        <begin position="96"/>
        <end position="133"/>
    </location>
</feature>
<feature type="transmembrane region" description="Helical" evidence="1">
    <location>
        <begin position="134"/>
        <end position="154"/>
    </location>
</feature>
<feature type="topological domain" description="Mitochondrial intermembrane" evidence="1">
    <location>
        <position position="155"/>
    </location>
</feature>
<feature type="short sequence motif" description="YXXL">
    <location>
        <begin position="18"/>
        <end position="21"/>
    </location>
</feature>
<feature type="modified residue" description="Phosphoserine; by CK2" evidence="5 15 16">
    <location>
        <position position="13"/>
    </location>
</feature>
<feature type="modified residue" description="Phosphoserine; by ULK1" evidence="3 8">
    <location>
        <position position="17"/>
    </location>
</feature>
<feature type="modified residue" description="Phosphotyrosine; by SRC" evidence="2">
    <location>
        <position position="18"/>
    </location>
</feature>
<feature type="cross-link" description="Glycyl lysine isopeptide (Lys-Gly) (interchain with G-Cter in ubiquitin)" evidence="10">
    <location>
        <position position="119"/>
    </location>
</feature>
<feature type="sequence variant" id="VAR_074638" description="In dbSNP:rs189499062." evidence="4">
    <original>M</original>
    <variation>V</variation>
    <location>
        <position position="56"/>
    </location>
</feature>
<feature type="mutagenesis site" description="Almost complete loss of interaction with MAP1 LC3 family proteins." evidence="3">
    <original>S</original>
    <variation>A</variation>
    <location>
        <position position="17"/>
    </location>
</feature>
<feature type="mutagenesis site" description="Impairs interaction with MAP1 LC3 family proteins." evidence="2">
    <original>Y</original>
    <variation>A</variation>
    <location>
        <position position="18"/>
    </location>
</feature>
<feature type="mutagenesis site" description="Abolishes phosphorylation by SRC." evidence="2">
    <original>Y</original>
    <variation>W</variation>
    <location>
        <position position="18"/>
    </location>
</feature>
<feature type="mutagenesis site" description="Significantly impaired mitophagy-inducing ability." evidence="7">
    <original>V</original>
    <variation>A</variation>
    <location>
        <position position="20"/>
    </location>
</feature>
<feature type="mutagenesis site" description="Impairs interaction with MAP1 LC3 family proteins." evidence="2">
    <original>L</original>
    <variation>A</variation>
    <location>
        <position position="21"/>
    </location>
</feature>
<feature type="mutagenesis site" description="Does not affect interaction with MAP1 LC3 family proteins.">
    <original>WW</original>
    <variation>AA</variation>
    <location>
        <begin position="32"/>
        <end position="33"/>
    </location>
</feature>
<feature type="mutagenesis site" description="Loss of binding to ULK1 and inhibition of mitophagy." evidence="3">
    <original>N</original>
    <variation>A</variation>
    <location>
        <position position="118"/>
    </location>
</feature>
<feature type="mutagenesis site" description="Strong loss of ubiquitination level." evidence="10">
    <original>K</original>
    <variation>R</variation>
    <location>
        <position position="119"/>
    </location>
</feature>
<feature type="strand" evidence="17">
    <location>
        <begin position="13"/>
        <end position="15"/>
    </location>
</feature>
<proteinExistence type="evidence at protein level"/>
<evidence type="ECO:0000255" key="1"/>
<evidence type="ECO:0000269" key="2">
    <source>
    </source>
</evidence>
<evidence type="ECO:0000269" key="3">
    <source>
    </source>
</evidence>
<evidence type="ECO:0000269" key="4">
    <source>
    </source>
</evidence>
<evidence type="ECO:0000269" key="5">
    <source>
    </source>
</evidence>
<evidence type="ECO:0000269" key="6">
    <source>
    </source>
</evidence>
<evidence type="ECO:0000269" key="7">
    <source>
    </source>
</evidence>
<evidence type="ECO:0000269" key="8">
    <source>
    </source>
</evidence>
<evidence type="ECO:0000269" key="9">
    <source>
    </source>
</evidence>
<evidence type="ECO:0000269" key="10">
    <source>
    </source>
</evidence>
<evidence type="ECO:0000269" key="11">
    <source>
    </source>
</evidence>
<evidence type="ECO:0000305" key="12"/>
<evidence type="ECO:0007744" key="13">
    <source>
        <dbReference type="PDB" id="2N9X"/>
    </source>
</evidence>
<evidence type="ECO:0007744" key="14">
    <source>
        <dbReference type="PDB" id="5GMV"/>
    </source>
</evidence>
<evidence type="ECO:0007744" key="15">
    <source>
    </source>
</evidence>
<evidence type="ECO:0007744" key="16">
    <source>
    </source>
</evidence>
<evidence type="ECO:0007829" key="17">
    <source>
        <dbReference type="PDB" id="2N9X"/>
    </source>
</evidence>
<protein>
    <recommendedName>
        <fullName>FUN14 domain-containing protein 1</fullName>
    </recommendedName>
</protein>
<sequence length="155" mass="17178">MATRNPPPQDYESDDDSYEVLDLTEYARRHQWWNRVFGHSSGPMVEKYSVATQIVMGGVTGWCAGFLFQKVGKLAATAVGGGFLLLQIASHSGYVQIDWKRVEKDVNKAKRQIKKRANKAAPEINNLIEEATEFIKQNIVISSGFVGGFLLGLAS</sequence>
<organism>
    <name type="scientific">Homo sapiens</name>
    <name type="common">Human</name>
    <dbReference type="NCBI Taxonomy" id="9606"/>
    <lineage>
        <taxon>Eukaryota</taxon>
        <taxon>Metazoa</taxon>
        <taxon>Chordata</taxon>
        <taxon>Craniata</taxon>
        <taxon>Vertebrata</taxon>
        <taxon>Euteleostomi</taxon>
        <taxon>Mammalia</taxon>
        <taxon>Eutheria</taxon>
        <taxon>Euarchontoglires</taxon>
        <taxon>Primates</taxon>
        <taxon>Haplorrhini</taxon>
        <taxon>Catarrhini</taxon>
        <taxon>Hominidae</taxon>
        <taxon>Homo</taxon>
    </lineage>
</organism>
<name>FUND1_HUMAN</name>
<gene>
    <name type="primary">FUNDC1</name>
</gene>
<keyword id="KW-0002">3D-structure</keyword>
<keyword id="KW-0072">Autophagy</keyword>
<keyword id="KW-1017">Isopeptide bond</keyword>
<keyword id="KW-0472">Membrane</keyword>
<keyword id="KW-0496">Mitochondrion</keyword>
<keyword id="KW-1000">Mitochondrion outer membrane</keyword>
<keyword id="KW-0597">Phosphoprotein</keyword>
<keyword id="KW-1267">Proteomics identification</keyword>
<keyword id="KW-1185">Reference proteome</keyword>
<keyword id="KW-0812">Transmembrane</keyword>
<keyword id="KW-1133">Transmembrane helix</keyword>
<keyword id="KW-0832">Ubl conjugation</keyword>
<reference key="1">
    <citation type="journal article" date="2005" name="Nature">
        <title>The DNA sequence of the human X chromosome.</title>
        <authorList>
            <person name="Ross M.T."/>
            <person name="Grafham D.V."/>
            <person name="Coffey A.J."/>
            <person name="Scherer S."/>
            <person name="McLay K."/>
            <person name="Muzny D."/>
            <person name="Platzer M."/>
            <person name="Howell G.R."/>
            <person name="Burrows C."/>
            <person name="Bird C.P."/>
            <person name="Frankish A."/>
            <person name="Lovell F.L."/>
            <person name="Howe K.L."/>
            <person name="Ashurst J.L."/>
            <person name="Fulton R.S."/>
            <person name="Sudbrak R."/>
            <person name="Wen G."/>
            <person name="Jones M.C."/>
            <person name="Hurles M.E."/>
            <person name="Andrews T.D."/>
            <person name="Scott C.E."/>
            <person name="Searle S."/>
            <person name="Ramser J."/>
            <person name="Whittaker A."/>
            <person name="Deadman R."/>
            <person name="Carter N.P."/>
            <person name="Hunt S.E."/>
            <person name="Chen R."/>
            <person name="Cree A."/>
            <person name="Gunaratne P."/>
            <person name="Havlak P."/>
            <person name="Hodgson A."/>
            <person name="Metzker M.L."/>
            <person name="Richards S."/>
            <person name="Scott G."/>
            <person name="Steffen D."/>
            <person name="Sodergren E."/>
            <person name="Wheeler D.A."/>
            <person name="Worley K.C."/>
            <person name="Ainscough R."/>
            <person name="Ambrose K.D."/>
            <person name="Ansari-Lari M.A."/>
            <person name="Aradhya S."/>
            <person name="Ashwell R.I."/>
            <person name="Babbage A.K."/>
            <person name="Bagguley C.L."/>
            <person name="Ballabio A."/>
            <person name="Banerjee R."/>
            <person name="Barker G.E."/>
            <person name="Barlow K.F."/>
            <person name="Barrett I.P."/>
            <person name="Bates K.N."/>
            <person name="Beare D.M."/>
            <person name="Beasley H."/>
            <person name="Beasley O."/>
            <person name="Beck A."/>
            <person name="Bethel G."/>
            <person name="Blechschmidt K."/>
            <person name="Brady N."/>
            <person name="Bray-Allen S."/>
            <person name="Bridgeman A.M."/>
            <person name="Brown A.J."/>
            <person name="Brown M.J."/>
            <person name="Bonnin D."/>
            <person name="Bruford E.A."/>
            <person name="Buhay C."/>
            <person name="Burch P."/>
            <person name="Burford D."/>
            <person name="Burgess J."/>
            <person name="Burrill W."/>
            <person name="Burton J."/>
            <person name="Bye J.M."/>
            <person name="Carder C."/>
            <person name="Carrel L."/>
            <person name="Chako J."/>
            <person name="Chapman J.C."/>
            <person name="Chavez D."/>
            <person name="Chen E."/>
            <person name="Chen G."/>
            <person name="Chen Y."/>
            <person name="Chen Z."/>
            <person name="Chinault C."/>
            <person name="Ciccodicola A."/>
            <person name="Clark S.Y."/>
            <person name="Clarke G."/>
            <person name="Clee C.M."/>
            <person name="Clegg S."/>
            <person name="Clerc-Blankenburg K."/>
            <person name="Clifford K."/>
            <person name="Cobley V."/>
            <person name="Cole C.G."/>
            <person name="Conquer J.S."/>
            <person name="Corby N."/>
            <person name="Connor R.E."/>
            <person name="David R."/>
            <person name="Davies J."/>
            <person name="Davis C."/>
            <person name="Davis J."/>
            <person name="Delgado O."/>
            <person name="Deshazo D."/>
            <person name="Dhami P."/>
            <person name="Ding Y."/>
            <person name="Dinh H."/>
            <person name="Dodsworth S."/>
            <person name="Draper H."/>
            <person name="Dugan-Rocha S."/>
            <person name="Dunham A."/>
            <person name="Dunn M."/>
            <person name="Durbin K.J."/>
            <person name="Dutta I."/>
            <person name="Eades T."/>
            <person name="Ellwood M."/>
            <person name="Emery-Cohen A."/>
            <person name="Errington H."/>
            <person name="Evans K.L."/>
            <person name="Faulkner L."/>
            <person name="Francis F."/>
            <person name="Frankland J."/>
            <person name="Fraser A.E."/>
            <person name="Galgoczy P."/>
            <person name="Gilbert J."/>
            <person name="Gill R."/>
            <person name="Gloeckner G."/>
            <person name="Gregory S.G."/>
            <person name="Gribble S."/>
            <person name="Griffiths C."/>
            <person name="Grocock R."/>
            <person name="Gu Y."/>
            <person name="Gwilliam R."/>
            <person name="Hamilton C."/>
            <person name="Hart E.A."/>
            <person name="Hawes A."/>
            <person name="Heath P.D."/>
            <person name="Heitmann K."/>
            <person name="Hennig S."/>
            <person name="Hernandez J."/>
            <person name="Hinzmann B."/>
            <person name="Ho S."/>
            <person name="Hoffs M."/>
            <person name="Howden P.J."/>
            <person name="Huckle E.J."/>
            <person name="Hume J."/>
            <person name="Hunt P.J."/>
            <person name="Hunt A.R."/>
            <person name="Isherwood J."/>
            <person name="Jacob L."/>
            <person name="Johnson D."/>
            <person name="Jones S."/>
            <person name="de Jong P.J."/>
            <person name="Joseph S.S."/>
            <person name="Keenan S."/>
            <person name="Kelly S."/>
            <person name="Kershaw J.K."/>
            <person name="Khan Z."/>
            <person name="Kioschis P."/>
            <person name="Klages S."/>
            <person name="Knights A.J."/>
            <person name="Kosiura A."/>
            <person name="Kovar-Smith C."/>
            <person name="Laird G.K."/>
            <person name="Langford C."/>
            <person name="Lawlor S."/>
            <person name="Leversha M."/>
            <person name="Lewis L."/>
            <person name="Liu W."/>
            <person name="Lloyd C."/>
            <person name="Lloyd D.M."/>
            <person name="Loulseged H."/>
            <person name="Loveland J.E."/>
            <person name="Lovell J.D."/>
            <person name="Lozado R."/>
            <person name="Lu J."/>
            <person name="Lyne R."/>
            <person name="Ma J."/>
            <person name="Maheshwari M."/>
            <person name="Matthews L.H."/>
            <person name="McDowall J."/>
            <person name="McLaren S."/>
            <person name="McMurray A."/>
            <person name="Meidl P."/>
            <person name="Meitinger T."/>
            <person name="Milne S."/>
            <person name="Miner G."/>
            <person name="Mistry S.L."/>
            <person name="Morgan M."/>
            <person name="Morris S."/>
            <person name="Mueller I."/>
            <person name="Mullikin J.C."/>
            <person name="Nguyen N."/>
            <person name="Nordsiek G."/>
            <person name="Nyakatura G."/>
            <person name="O'dell C.N."/>
            <person name="Okwuonu G."/>
            <person name="Palmer S."/>
            <person name="Pandian R."/>
            <person name="Parker D."/>
            <person name="Parrish J."/>
            <person name="Pasternak S."/>
            <person name="Patel D."/>
            <person name="Pearce A.V."/>
            <person name="Pearson D.M."/>
            <person name="Pelan S.E."/>
            <person name="Perez L."/>
            <person name="Porter K.M."/>
            <person name="Ramsey Y."/>
            <person name="Reichwald K."/>
            <person name="Rhodes S."/>
            <person name="Ridler K.A."/>
            <person name="Schlessinger D."/>
            <person name="Schueler M.G."/>
            <person name="Sehra H.K."/>
            <person name="Shaw-Smith C."/>
            <person name="Shen H."/>
            <person name="Sheridan E.M."/>
            <person name="Shownkeen R."/>
            <person name="Skuce C.D."/>
            <person name="Smith M.L."/>
            <person name="Sotheran E.C."/>
            <person name="Steingruber H.E."/>
            <person name="Steward C.A."/>
            <person name="Storey R."/>
            <person name="Swann R.M."/>
            <person name="Swarbreck D."/>
            <person name="Tabor P.E."/>
            <person name="Taudien S."/>
            <person name="Taylor T."/>
            <person name="Teague B."/>
            <person name="Thomas K."/>
            <person name="Thorpe A."/>
            <person name="Timms K."/>
            <person name="Tracey A."/>
            <person name="Trevanion S."/>
            <person name="Tromans A.C."/>
            <person name="d'Urso M."/>
            <person name="Verduzco D."/>
            <person name="Villasana D."/>
            <person name="Waldron L."/>
            <person name="Wall M."/>
            <person name="Wang Q."/>
            <person name="Warren J."/>
            <person name="Warry G.L."/>
            <person name="Wei X."/>
            <person name="West A."/>
            <person name="Whitehead S.L."/>
            <person name="Whiteley M.N."/>
            <person name="Wilkinson J.E."/>
            <person name="Willey D.L."/>
            <person name="Williams G."/>
            <person name="Williams L."/>
            <person name="Williamson A."/>
            <person name="Williamson H."/>
            <person name="Wilming L."/>
            <person name="Woodmansey R.L."/>
            <person name="Wray P.W."/>
            <person name="Yen J."/>
            <person name="Zhang J."/>
            <person name="Zhou J."/>
            <person name="Zoghbi H."/>
            <person name="Zorilla S."/>
            <person name="Buck D."/>
            <person name="Reinhardt R."/>
            <person name="Poustka A."/>
            <person name="Rosenthal A."/>
            <person name="Lehrach H."/>
            <person name="Meindl A."/>
            <person name="Minx P.J."/>
            <person name="Hillier L.W."/>
            <person name="Willard H.F."/>
            <person name="Wilson R.K."/>
            <person name="Waterston R.H."/>
            <person name="Rice C.M."/>
            <person name="Vaudin M."/>
            <person name="Coulson A."/>
            <person name="Nelson D.L."/>
            <person name="Weinstock G."/>
            <person name="Sulston J.E."/>
            <person name="Durbin R.M."/>
            <person name="Hubbard T."/>
            <person name="Gibbs R.A."/>
            <person name="Beck S."/>
            <person name="Rogers J."/>
            <person name="Bentley D.R."/>
        </authorList>
    </citation>
    <scope>NUCLEOTIDE SEQUENCE [LARGE SCALE GENOMIC DNA]</scope>
</reference>
<reference key="2">
    <citation type="journal article" date="2004" name="Genome Res.">
        <title>The status, quality, and expansion of the NIH full-length cDNA project: the Mammalian Gene Collection (MGC).</title>
        <authorList>
            <consortium name="The MGC Project Team"/>
        </authorList>
    </citation>
    <scope>NUCLEOTIDE SEQUENCE [LARGE SCALE MRNA]</scope>
    <source>
        <tissue>Brain</tissue>
    </source>
</reference>
<reference key="3">
    <citation type="journal article" date="2008" name="Proc. Natl. Acad. Sci. U.S.A.">
        <title>A quantitative atlas of mitotic phosphorylation.</title>
        <authorList>
            <person name="Dephoure N."/>
            <person name="Zhou C."/>
            <person name="Villen J."/>
            <person name="Beausoleil S.A."/>
            <person name="Bakalarski C.E."/>
            <person name="Elledge S.J."/>
            <person name="Gygi S.P."/>
        </authorList>
    </citation>
    <scope>PHOSPHORYLATION [LARGE SCALE ANALYSIS] AT SER-13</scope>
    <scope>IDENTIFICATION BY MASS SPECTROMETRY [LARGE SCALE ANALYSIS]</scope>
    <source>
        <tissue>Cervix carcinoma</tissue>
    </source>
</reference>
<reference key="4">
    <citation type="journal article" date="2009" name="Sci. Signal.">
        <title>Quantitative phosphoproteomic analysis of T cell receptor signaling reveals system-wide modulation of protein-protein interactions.</title>
        <authorList>
            <person name="Mayya V."/>
            <person name="Lundgren D.H."/>
            <person name="Hwang S.-I."/>
            <person name="Rezaul K."/>
            <person name="Wu L."/>
            <person name="Eng J.K."/>
            <person name="Rodionov V."/>
            <person name="Han D.K."/>
        </authorList>
    </citation>
    <scope>PHOSPHORYLATION [LARGE SCALE ANALYSIS] AT SER-13</scope>
    <scope>IDENTIFICATION BY MASS SPECTROMETRY [LARGE SCALE ANALYSIS]</scope>
    <source>
        <tissue>Leukemic T-cell</tissue>
    </source>
</reference>
<reference key="5">
    <citation type="journal article" date="2012" name="Nat. Cell Biol.">
        <title>Mitochondrial outer-membrane protein FUNDC1 mediates hypoxia-induced mitophagy in mammalian cells.</title>
        <authorList>
            <person name="Liu L."/>
            <person name="Feng D."/>
            <person name="Chen G."/>
            <person name="Chen M."/>
            <person name="Zheng Q."/>
            <person name="Song P."/>
            <person name="Ma Q."/>
            <person name="Zhu C."/>
            <person name="Wang R."/>
            <person name="Qi W."/>
            <person name="Huang L."/>
            <person name="Xue P."/>
            <person name="Li B."/>
            <person name="Wang X."/>
            <person name="Jin H."/>
            <person name="Wang J."/>
            <person name="Yang F."/>
            <person name="Liu P."/>
            <person name="Zhu Y."/>
            <person name="Sui S."/>
            <person name="Chen Q."/>
        </authorList>
    </citation>
    <scope>FUNCTION</scope>
    <scope>SUBCELLULAR LOCATION</scope>
    <scope>TOPOLOGY</scope>
    <scope>TISSUE SPECIFICITY</scope>
    <scope>PHOSPHORYLATION AT TYR-18</scope>
    <scope>INTERACTION WITH MAP1LC3A; MAP1LC3B AND GABARAP</scope>
    <scope>MUTAGENESIS OF TYR-18; LEU-21 AND 31-TRP-TRP-32</scope>
</reference>
<reference key="6">
    <citation type="journal article" date="2013" name="J. Proteome Res.">
        <title>Toward a comprehensive characterization of a human cancer cell phosphoproteome.</title>
        <authorList>
            <person name="Zhou H."/>
            <person name="Di Palma S."/>
            <person name="Preisinger C."/>
            <person name="Peng M."/>
            <person name="Polat A.N."/>
            <person name="Heck A.J."/>
            <person name="Mohammed S."/>
        </authorList>
    </citation>
    <scope>IDENTIFICATION BY MASS SPECTROMETRY [LARGE SCALE ANALYSIS]</scope>
    <source>
        <tissue>Erythroleukemia</tissue>
    </source>
</reference>
<reference key="7">
    <citation type="journal article" date="2014" name="EMBO Rep.">
        <title>ULK1 translocates to mitochondria and phosphorylates FUNDC1 to regulate mitophagy.</title>
        <authorList>
            <person name="Wu W."/>
            <person name="Tian W."/>
            <person name="Hu Z."/>
            <person name="Chen G."/>
            <person name="Huang L."/>
            <person name="Li W."/>
            <person name="Zhang X."/>
            <person name="Xue P."/>
            <person name="Zhou C."/>
            <person name="Liu L."/>
            <person name="Zhu Y."/>
            <person name="Zhang X."/>
            <person name="Li L."/>
            <person name="Zhang L."/>
            <person name="Sui S."/>
            <person name="Zhao B."/>
            <person name="Feng D."/>
        </authorList>
    </citation>
    <scope>FUNCTION</scope>
    <scope>PHOSPHORYLATION AT SER-17</scope>
    <scope>MUTAGENESIS OF SER-17 AND ASN-118</scope>
</reference>
<reference key="8">
    <citation type="journal article" date="2014" name="Mol. Cell">
        <title>A regulatory signaling loop comprising the PGAM5 phosphatase and CK2 controls receptor-mediated mitophagy.</title>
        <authorList>
            <person name="Chen G."/>
            <person name="Han Z."/>
            <person name="Feng D."/>
            <person name="Chen Y."/>
            <person name="Chen L."/>
            <person name="Wu H."/>
            <person name="Huang L."/>
            <person name="Zhou C."/>
            <person name="Cai X."/>
            <person name="Fu C."/>
            <person name="Duan L."/>
            <person name="Wang X."/>
            <person name="Liu L."/>
            <person name="Liu X."/>
            <person name="Shen Y."/>
            <person name="Zhu Y."/>
            <person name="Chen Q."/>
        </authorList>
    </citation>
    <scope>FUNCTION</scope>
    <scope>PHOSPHORYLATION AT SER-13</scope>
    <scope>DEPHOSPHORYLATION BY PGAM5</scope>
</reference>
<reference key="9">
    <citation type="journal article" date="2016" name="EMBO J.">
        <title>FUNDC1 regulates mitochondrial dynamics at the ER-mitochondrial contact site under hypoxic conditions.</title>
        <authorList>
            <person name="Wu W."/>
            <person name="Lin C."/>
            <person name="Wu K."/>
            <person name="Jiang L."/>
            <person name="Wang X."/>
            <person name="Li W."/>
            <person name="Zhuang H."/>
            <person name="Zhang X."/>
            <person name="Chen H."/>
            <person name="Li S."/>
            <person name="Yang Y."/>
            <person name="Lu Y."/>
            <person name="Wang J."/>
            <person name="Zhu R."/>
            <person name="Zhang L."/>
            <person name="Sui S."/>
            <person name="Tan N."/>
            <person name="Zhao B."/>
            <person name="Zhang J."/>
            <person name="Li L."/>
            <person name="Feng D."/>
        </authorList>
    </citation>
    <scope>FUNCTION</scope>
    <scope>SUBCELLULAR LOCATION</scope>
    <scope>INTERACTION WITH DNM1L/DRP1</scope>
</reference>
<reference key="10">
    <citation type="journal article" date="2021" name="Nat. Commun.">
        <title>FUNDC1-dependent mitochondria-associated endoplasmic reticulum membranes are involved in angiogenesis and neoangiogenesis.</title>
        <authorList>
            <person name="Wang C."/>
            <person name="Dai X."/>
            <person name="Wu S."/>
            <person name="Xu W."/>
            <person name="Song P."/>
            <person name="Huang K."/>
        </authorList>
    </citation>
    <scope>FUNCTION</scope>
</reference>
<reference key="11">
    <citation type="journal article" date="2021" name="J. Cell Biol.">
        <title>USP19 promotes hypoxia-induced mitochondrial division via FUNDC1 at ER-mitochondria contact sites.</title>
        <authorList>
            <person name="Chai P."/>
            <person name="Cheng Y."/>
            <person name="Hou C."/>
            <person name="Yin L."/>
            <person name="Zhang D."/>
            <person name="Hu Y."/>
            <person name="Chen Q."/>
            <person name="Zheng P."/>
            <person name="Teng J."/>
            <person name="Chen J."/>
        </authorList>
    </citation>
    <scope>FUNCTION</scope>
    <scope>DEUBIQUITINATION BY USP19</scope>
    <scope>UBIQUITINATION AT LYS-119</scope>
    <scope>MUTAGENESIS OF LYS-119</scope>
    <scope>SUBCELLULAR LOCATION</scope>
</reference>
<reference key="12">
    <citation type="journal article" date="2023" name="J. Adv. Res.">
        <title>FUNDC1 interacts with GPx4 to govern hepatic ferroptosis and fibrotic injury through a mitophagy-dependent manner.</title>
        <authorList>
            <person name="Bi Y."/>
            <person name="Liu S."/>
            <person name="Qin X."/>
            <person name="Abudureyimu M."/>
            <person name="Wang L."/>
            <person name="Zou R."/>
            <person name="Ajoolabady A."/>
            <person name="Zhang W."/>
            <person name="Peng H."/>
            <person name="Ren J."/>
            <person name="Zhang Y."/>
        </authorList>
    </citation>
    <scope>FUNCTION</scope>
    <scope>INTERACTION WITH GPX4</scope>
</reference>
<reference evidence="13" key="13">
    <citation type="journal article" date="2016" name="Autophagy">
        <title>Structural basis for the phosphorylation of FUNDC1 LIR as a molecular switch of mitophagy.</title>
        <authorList>
            <person name="Kuang Y."/>
            <person name="Ma K."/>
            <person name="Zhou C."/>
            <person name="Ding P."/>
            <person name="Zhu Y."/>
            <person name="Chen Q."/>
            <person name="Xia B."/>
        </authorList>
    </citation>
    <scope>STRUCTURE BY NMR OF 10-26</scope>
    <scope>FUNCTION</scope>
    <scope>PHOSPHORYLATION AT TYR-18</scope>
    <scope>MUTAGENESIS OF VAL-20</scope>
</reference>
<reference evidence="14" key="14">
    <citation type="journal article" date="2017" name="Protein Cell">
        <title>Structural insights into the recognition of phosphorylated FUNDC1 by LC3B in mitophagy.</title>
        <authorList>
            <person name="Lv M."/>
            <person name="Wang C."/>
            <person name="Li F."/>
            <person name="Peng J."/>
            <person name="Wen B."/>
            <person name="Gong Q."/>
            <person name="Shi Y."/>
            <person name="Tang Y."/>
        </authorList>
    </citation>
    <scope>X-RAY CRYSTALLOGRAPHY (2.25 ANGSTROMS) OF 16-23</scope>
    <scope>INTERACTION WITH MAP1LC3B</scope>
    <scope>PHOSPHORYLATION AT SER-13 AND SER-17</scope>
</reference>
<reference key="15">
    <citation type="journal article" date="2014" name="Am. J. Med. Genet. A">
        <title>A novel EBP c.224T&gt;A mutation supports the existence of a male-specific disorder independent of CDPX2.</title>
        <authorList>
            <person name="Barboza-Cerda M.C."/>
            <person name="Wong L.J."/>
            <person name="Martinez-de-Villarreal L.E."/>
            <person name="Zhang V.W."/>
            <person name="Dector M.A."/>
        </authorList>
    </citation>
    <scope>VARIANT VAL-56</scope>
</reference>